<sequence length="96" mass="10394">MEIKTTAVAGTLESSDIQIMLMAGDNGIQIDLESDVIKQFGAQIKHVITTTLQQLNIDNVKVRAVDKGALDCVIKARTITAAQRALETTTPAWEVL</sequence>
<evidence type="ECO:0000255" key="1">
    <source>
        <dbReference type="HAMAP-Rule" id="MF_00805"/>
    </source>
</evidence>
<organism>
    <name type="scientific">Lactiplantibacillus plantarum (strain ATCC BAA-793 / NCIMB 8826 / WCFS1)</name>
    <name type="common">Lactobacillus plantarum</name>
    <dbReference type="NCBI Taxonomy" id="220668"/>
    <lineage>
        <taxon>Bacteria</taxon>
        <taxon>Bacillati</taxon>
        <taxon>Bacillota</taxon>
        <taxon>Bacilli</taxon>
        <taxon>Lactobacillales</taxon>
        <taxon>Lactobacillaceae</taxon>
        <taxon>Lactiplantibacillus</taxon>
    </lineage>
</organism>
<dbReference type="EMBL" id="AL935263">
    <property type="protein sequence ID" value="CCC78507.1"/>
    <property type="molecule type" value="Genomic_DNA"/>
</dbReference>
<dbReference type="RefSeq" id="WP_003641303.1">
    <property type="nucleotide sequence ID" value="NC_004567.2"/>
</dbReference>
<dbReference type="RefSeq" id="YP_004889021.1">
    <property type="nucleotide sequence ID" value="NC_004567.2"/>
</dbReference>
<dbReference type="SMR" id="Q88XS8"/>
<dbReference type="STRING" id="220668.lp_1107"/>
<dbReference type="EnsemblBacteria" id="CCC78507">
    <property type="protein sequence ID" value="CCC78507"/>
    <property type="gene ID" value="lp_1107"/>
</dbReference>
<dbReference type="GeneID" id="77217580"/>
<dbReference type="KEGG" id="lpl:lp_1107"/>
<dbReference type="PATRIC" id="fig|220668.9.peg.936"/>
<dbReference type="eggNOG" id="COG3052">
    <property type="taxonomic scope" value="Bacteria"/>
</dbReference>
<dbReference type="HOGENOM" id="CLU_158489_0_0_9"/>
<dbReference type="OrthoDB" id="1120942at2"/>
<dbReference type="PhylomeDB" id="Q88XS8"/>
<dbReference type="Proteomes" id="UP000000432">
    <property type="component" value="Chromosome"/>
</dbReference>
<dbReference type="GO" id="GO:0005737">
    <property type="term" value="C:cytoplasm"/>
    <property type="evidence" value="ECO:0007669"/>
    <property type="project" value="UniProtKB-SubCell"/>
</dbReference>
<dbReference type="HAMAP" id="MF_00805">
    <property type="entry name" value="CitD"/>
    <property type="match status" value="1"/>
</dbReference>
<dbReference type="InterPro" id="IPR006495">
    <property type="entry name" value="CitD"/>
</dbReference>
<dbReference type="InterPro" id="IPR023439">
    <property type="entry name" value="Mal_deCO2ase/Cit_lyase_ACP"/>
</dbReference>
<dbReference type="NCBIfam" id="TIGR01608">
    <property type="entry name" value="citD"/>
    <property type="match status" value="1"/>
</dbReference>
<dbReference type="NCBIfam" id="NF009726">
    <property type="entry name" value="PRK13253.1"/>
    <property type="match status" value="1"/>
</dbReference>
<dbReference type="Pfam" id="PF06857">
    <property type="entry name" value="ACP"/>
    <property type="match status" value="1"/>
</dbReference>
<dbReference type="PIRSF" id="PIRSF002736">
    <property type="entry name" value="Citrt_lyas_gamma"/>
    <property type="match status" value="1"/>
</dbReference>
<keyword id="KW-0963">Cytoplasm</keyword>
<keyword id="KW-0597">Phosphoprotein</keyword>
<keyword id="KW-1185">Reference proteome</keyword>
<protein>
    <recommendedName>
        <fullName evidence="1">Citrate lyase acyl carrier protein</fullName>
    </recommendedName>
    <alternativeName>
        <fullName evidence="1">Citrate lyase gamma chain</fullName>
    </alternativeName>
</protein>
<gene>
    <name evidence="1" type="primary">citD</name>
    <name type="ordered locus">lp_1107</name>
</gene>
<name>CITD_LACPL</name>
<accession>Q88XS8</accession>
<accession>F9UMR8</accession>
<proteinExistence type="inferred from homology"/>
<comment type="function">
    <text evidence="1">Covalent carrier of the coenzyme of citrate lyase.</text>
</comment>
<comment type="subunit">
    <text evidence="1">Oligomer with a subunit composition of (alpha,beta,gamma)6.</text>
</comment>
<comment type="subcellular location">
    <subcellularLocation>
        <location evidence="1">Cytoplasm</location>
    </subcellularLocation>
</comment>
<comment type="similarity">
    <text evidence="1">Belongs to the CitD family.</text>
</comment>
<feature type="chain" id="PRO_0000214703" description="Citrate lyase acyl carrier protein">
    <location>
        <begin position="1"/>
        <end position="96"/>
    </location>
</feature>
<feature type="modified residue" description="O-(phosphoribosyl dephospho-coenzyme A)serine" evidence="1">
    <location>
        <position position="14"/>
    </location>
</feature>
<reference key="1">
    <citation type="journal article" date="2003" name="Proc. Natl. Acad. Sci. U.S.A.">
        <title>Complete genome sequence of Lactobacillus plantarum WCFS1.</title>
        <authorList>
            <person name="Kleerebezem M."/>
            <person name="Boekhorst J."/>
            <person name="van Kranenburg R."/>
            <person name="Molenaar D."/>
            <person name="Kuipers O.P."/>
            <person name="Leer R."/>
            <person name="Tarchini R."/>
            <person name="Peters S.A."/>
            <person name="Sandbrink H.M."/>
            <person name="Fiers M.W.E.J."/>
            <person name="Stiekema W."/>
            <person name="Klein Lankhorst R.M."/>
            <person name="Bron P.A."/>
            <person name="Hoffer S.M."/>
            <person name="Nierop Groot M.N."/>
            <person name="Kerkhoven R."/>
            <person name="De Vries M."/>
            <person name="Ursing B."/>
            <person name="De Vos W.M."/>
            <person name="Siezen R.J."/>
        </authorList>
    </citation>
    <scope>NUCLEOTIDE SEQUENCE [LARGE SCALE GENOMIC DNA]</scope>
    <source>
        <strain>ATCC BAA-793 / NCIMB 8826 / WCFS1</strain>
    </source>
</reference>
<reference key="2">
    <citation type="journal article" date="2012" name="J. Bacteriol.">
        <title>Complete resequencing and reannotation of the Lactobacillus plantarum WCFS1 genome.</title>
        <authorList>
            <person name="Siezen R.J."/>
            <person name="Francke C."/>
            <person name="Renckens B."/>
            <person name="Boekhorst J."/>
            <person name="Wels M."/>
            <person name="Kleerebezem M."/>
            <person name="van Hijum S.A."/>
        </authorList>
    </citation>
    <scope>NUCLEOTIDE SEQUENCE [LARGE SCALE GENOMIC DNA]</scope>
    <scope>GENOME REANNOTATION</scope>
    <source>
        <strain>ATCC BAA-793 / NCIMB 8826 / WCFS1</strain>
    </source>
</reference>